<reference key="1">
    <citation type="journal article" date="2009" name="J. Bacteriol.">
        <title>The complete genome sequence of Helicobacter pylori strain G27.</title>
        <authorList>
            <person name="Baltrus D.A."/>
            <person name="Amieva M.R."/>
            <person name="Covacci A."/>
            <person name="Lowe T.M."/>
            <person name="Merrell D.S."/>
            <person name="Ottemann K.M."/>
            <person name="Stein M."/>
            <person name="Salama N.R."/>
            <person name="Guillemin K."/>
        </authorList>
    </citation>
    <scope>NUCLEOTIDE SEQUENCE [LARGE SCALE GENOMIC DNA]</scope>
    <source>
        <strain>G27</strain>
    </source>
</reference>
<sequence length="339" mass="37713">MRHGDISSSPDTVGVAVVNYKMPRLHTKNEVLENCRNIAKVIGGVKQGLPGLDLIIFPEYSTHGIMYDRQEMFDTAASVPGEETAIFAEACKKNKVWGVFSLTGEKHEQAKKNPYNTLILVNDKGEIVQKYRKILPWCPIECWYPGDKTYVVDGPKGLKVSLIICDDGNYPEIWRDCAMRGAELIVRCQGYMYPAKEQQIAIVKAMAWANQCYVAVANATGFDGVYSYFGHSSIIGFDGHTLGECGEEENGLQYAQLSVQQIRDARKYDQSQNQLFKLLHRGYSGVFASGDGDKGVAECPFEFYKTWVNDPKKAQENVEKITRPSVGVAACPVGDLPTK</sequence>
<feature type="chain" id="PRO_1000139807" description="Aliphatic amidase">
    <location>
        <begin position="1"/>
        <end position="339"/>
    </location>
</feature>
<feature type="domain" description="CN hydrolase" evidence="2">
    <location>
        <begin position="13"/>
        <end position="259"/>
    </location>
</feature>
<feature type="active site" description="Proton acceptor" evidence="1">
    <location>
        <position position="59"/>
    </location>
</feature>
<feature type="active site" description="Proton donor" evidence="1">
    <location>
        <position position="133"/>
    </location>
</feature>
<feature type="active site" description="Nucleophile" evidence="1">
    <location>
        <position position="165"/>
    </location>
</feature>
<name>AMIE_HELPG</name>
<gene>
    <name evidence="1" type="primary">amiE</name>
    <name type="ordered locus">HPG27_273</name>
</gene>
<accession>B5ZA60</accession>
<organism>
    <name type="scientific">Helicobacter pylori (strain G27)</name>
    <dbReference type="NCBI Taxonomy" id="563041"/>
    <lineage>
        <taxon>Bacteria</taxon>
        <taxon>Pseudomonadati</taxon>
        <taxon>Campylobacterota</taxon>
        <taxon>Epsilonproteobacteria</taxon>
        <taxon>Campylobacterales</taxon>
        <taxon>Helicobacteraceae</taxon>
        <taxon>Helicobacter</taxon>
    </lineage>
</organism>
<dbReference type="EC" id="3.5.1.4" evidence="1"/>
<dbReference type="EMBL" id="CP001173">
    <property type="protein sequence ID" value="ACI27040.1"/>
    <property type="molecule type" value="Genomic_DNA"/>
</dbReference>
<dbReference type="RefSeq" id="WP_001215729.1">
    <property type="nucleotide sequence ID" value="NC_011333.1"/>
</dbReference>
<dbReference type="SMR" id="B5ZA60"/>
<dbReference type="KEGG" id="hpg:HPG27_273"/>
<dbReference type="HOGENOM" id="CLU_071797_0_0_7"/>
<dbReference type="Proteomes" id="UP000001735">
    <property type="component" value="Chromosome"/>
</dbReference>
<dbReference type="GO" id="GO:0004040">
    <property type="term" value="F:amidase activity"/>
    <property type="evidence" value="ECO:0007669"/>
    <property type="project" value="UniProtKB-UniRule"/>
</dbReference>
<dbReference type="CDD" id="cd07565">
    <property type="entry name" value="aliphatic_amidase"/>
    <property type="match status" value="1"/>
</dbReference>
<dbReference type="FunFam" id="3.60.110.10:FF:000014">
    <property type="entry name" value="Aliphatic amidase"/>
    <property type="match status" value="1"/>
</dbReference>
<dbReference type="Gene3D" id="3.60.110.10">
    <property type="entry name" value="Carbon-nitrogen hydrolase"/>
    <property type="match status" value="1"/>
</dbReference>
<dbReference type="HAMAP" id="MF_01242">
    <property type="entry name" value="Aliphatic_amidase"/>
    <property type="match status" value="1"/>
</dbReference>
<dbReference type="InterPro" id="IPR050345">
    <property type="entry name" value="Aliph_Amidase/BUP"/>
</dbReference>
<dbReference type="InterPro" id="IPR023719">
    <property type="entry name" value="Aliphatic_amidase"/>
</dbReference>
<dbReference type="InterPro" id="IPR003010">
    <property type="entry name" value="C-N_Hydrolase"/>
</dbReference>
<dbReference type="InterPro" id="IPR036526">
    <property type="entry name" value="C-N_Hydrolase_sf"/>
</dbReference>
<dbReference type="NCBIfam" id="NF009802">
    <property type="entry name" value="PRK13286.1"/>
    <property type="match status" value="1"/>
</dbReference>
<dbReference type="PANTHER" id="PTHR43674:SF14">
    <property type="entry name" value="ALIPHATIC AMIDASE"/>
    <property type="match status" value="1"/>
</dbReference>
<dbReference type="PANTHER" id="PTHR43674">
    <property type="entry name" value="NITRILASE C965.09-RELATED"/>
    <property type="match status" value="1"/>
</dbReference>
<dbReference type="Pfam" id="PF00795">
    <property type="entry name" value="CN_hydrolase"/>
    <property type="match status" value="1"/>
</dbReference>
<dbReference type="SUPFAM" id="SSF56317">
    <property type="entry name" value="Carbon-nitrogen hydrolase"/>
    <property type="match status" value="1"/>
</dbReference>
<dbReference type="PROSITE" id="PS50263">
    <property type="entry name" value="CN_HYDROLASE"/>
    <property type="match status" value="1"/>
</dbReference>
<comment type="function">
    <text evidence="1">Catalyzes the hydrolysis of short-chain aliphatic amides to their corresponding organic acids with release of ammonia.</text>
</comment>
<comment type="function">
    <text evidence="1">Also exhibits in vitro acyl transferase activity, transferring the acyl moiety of short-chain amides to hydroxylamine to form hydroxamates.</text>
</comment>
<comment type="catalytic activity">
    <reaction evidence="1">
        <text>a monocarboxylic acid amide + H2O = a monocarboxylate + NH4(+)</text>
        <dbReference type="Rhea" id="RHEA:12020"/>
        <dbReference type="ChEBI" id="CHEBI:15377"/>
        <dbReference type="ChEBI" id="CHEBI:28938"/>
        <dbReference type="ChEBI" id="CHEBI:35757"/>
        <dbReference type="ChEBI" id="CHEBI:83628"/>
        <dbReference type="EC" id="3.5.1.4"/>
    </reaction>
</comment>
<comment type="similarity">
    <text evidence="1">Belongs to the carbon-nitrogen hydrolase superfamily. Aliphatic amidase family.</text>
</comment>
<evidence type="ECO:0000255" key="1">
    <source>
        <dbReference type="HAMAP-Rule" id="MF_01242"/>
    </source>
</evidence>
<evidence type="ECO:0000255" key="2">
    <source>
        <dbReference type="PROSITE-ProRule" id="PRU00054"/>
    </source>
</evidence>
<proteinExistence type="inferred from homology"/>
<protein>
    <recommendedName>
        <fullName evidence="1">Aliphatic amidase</fullName>
        <ecNumber evidence="1">3.5.1.4</ecNumber>
    </recommendedName>
    <alternativeName>
        <fullName evidence="1">Acylamide amidohydrolase</fullName>
    </alternativeName>
</protein>
<keyword id="KW-0378">Hydrolase</keyword>
<keyword id="KW-1185">Reference proteome</keyword>